<protein>
    <recommendedName>
        <fullName evidence="1">Tetraacyldisaccharide 4'-kinase</fullName>
        <ecNumber evidence="1">2.7.1.130</ecNumber>
    </recommendedName>
    <alternativeName>
        <fullName evidence="1">Lipid A 4'-kinase</fullName>
    </alternativeName>
</protein>
<feature type="chain" id="PRO_1000049889" description="Tetraacyldisaccharide 4'-kinase">
    <location>
        <begin position="1"/>
        <end position="341"/>
    </location>
</feature>
<feature type="binding site" evidence="1">
    <location>
        <begin position="54"/>
        <end position="61"/>
    </location>
    <ligand>
        <name>ATP</name>
        <dbReference type="ChEBI" id="CHEBI:30616"/>
    </ligand>
</feature>
<proteinExistence type="inferred from homology"/>
<reference key="1">
    <citation type="journal article" date="2009" name="PLoS ONE">
        <title>Genome degradation in Brucella ovis corresponds with narrowing of its host range and tissue tropism.</title>
        <authorList>
            <person name="Tsolis R.M."/>
            <person name="Seshadri R."/>
            <person name="Santos R.L."/>
            <person name="Sangari F.J."/>
            <person name="Lobo J.M."/>
            <person name="de Jong M.F."/>
            <person name="Ren Q."/>
            <person name="Myers G."/>
            <person name="Brinkac L.M."/>
            <person name="Nelson W.C."/>
            <person name="Deboy R.T."/>
            <person name="Angiuoli S."/>
            <person name="Khouri H."/>
            <person name="Dimitrov G."/>
            <person name="Robinson J.R."/>
            <person name="Mulligan S."/>
            <person name="Walker R.L."/>
            <person name="Elzer P.E."/>
            <person name="Hassan K.A."/>
            <person name="Paulsen I.T."/>
        </authorList>
    </citation>
    <scope>NUCLEOTIDE SEQUENCE [LARGE SCALE GENOMIC DNA]</scope>
    <source>
        <strain>ATCC 25840 / 63/290 / NCTC 10512</strain>
    </source>
</reference>
<name>LPXK_BRUO2</name>
<accession>A5VTV9</accession>
<dbReference type="EC" id="2.7.1.130" evidence="1"/>
<dbReference type="EMBL" id="CP000709">
    <property type="protein sequence ID" value="ABQ62572.1"/>
    <property type="molecule type" value="Genomic_DNA"/>
</dbReference>
<dbReference type="RefSeq" id="WP_006015233.1">
    <property type="nucleotide sequence ID" value="NC_009504.1"/>
</dbReference>
<dbReference type="SMR" id="A5VTV9"/>
<dbReference type="GeneID" id="45125612"/>
<dbReference type="KEGG" id="bov:BOV_A0196"/>
<dbReference type="HOGENOM" id="CLU_038816_0_0_5"/>
<dbReference type="PhylomeDB" id="A5VTV9"/>
<dbReference type="UniPathway" id="UPA00359">
    <property type="reaction ID" value="UER00482"/>
</dbReference>
<dbReference type="Proteomes" id="UP000006383">
    <property type="component" value="Chromosome II"/>
</dbReference>
<dbReference type="GO" id="GO:0005886">
    <property type="term" value="C:plasma membrane"/>
    <property type="evidence" value="ECO:0007669"/>
    <property type="project" value="TreeGrafter"/>
</dbReference>
<dbReference type="GO" id="GO:0005524">
    <property type="term" value="F:ATP binding"/>
    <property type="evidence" value="ECO:0007669"/>
    <property type="project" value="UniProtKB-UniRule"/>
</dbReference>
<dbReference type="GO" id="GO:0009029">
    <property type="term" value="F:tetraacyldisaccharide 4'-kinase activity"/>
    <property type="evidence" value="ECO:0007669"/>
    <property type="project" value="UniProtKB-UniRule"/>
</dbReference>
<dbReference type="GO" id="GO:0009245">
    <property type="term" value="P:lipid A biosynthetic process"/>
    <property type="evidence" value="ECO:0007669"/>
    <property type="project" value="UniProtKB-UniRule"/>
</dbReference>
<dbReference type="GO" id="GO:0009244">
    <property type="term" value="P:lipopolysaccharide core region biosynthetic process"/>
    <property type="evidence" value="ECO:0007669"/>
    <property type="project" value="TreeGrafter"/>
</dbReference>
<dbReference type="HAMAP" id="MF_00409">
    <property type="entry name" value="LpxK"/>
    <property type="match status" value="1"/>
</dbReference>
<dbReference type="InterPro" id="IPR003758">
    <property type="entry name" value="LpxK"/>
</dbReference>
<dbReference type="InterPro" id="IPR027417">
    <property type="entry name" value="P-loop_NTPase"/>
</dbReference>
<dbReference type="NCBIfam" id="TIGR00682">
    <property type="entry name" value="lpxK"/>
    <property type="match status" value="1"/>
</dbReference>
<dbReference type="PANTHER" id="PTHR42724">
    <property type="entry name" value="TETRAACYLDISACCHARIDE 4'-KINASE"/>
    <property type="match status" value="1"/>
</dbReference>
<dbReference type="PANTHER" id="PTHR42724:SF1">
    <property type="entry name" value="TETRAACYLDISACCHARIDE 4'-KINASE, MITOCHONDRIAL-RELATED"/>
    <property type="match status" value="1"/>
</dbReference>
<dbReference type="Pfam" id="PF02606">
    <property type="entry name" value="LpxK"/>
    <property type="match status" value="1"/>
</dbReference>
<dbReference type="SUPFAM" id="SSF52540">
    <property type="entry name" value="P-loop containing nucleoside triphosphate hydrolases"/>
    <property type="match status" value="1"/>
</dbReference>
<gene>
    <name evidence="1" type="primary">lpxK</name>
    <name type="ordered locus">BOV_A0196</name>
</gene>
<organism>
    <name type="scientific">Brucella ovis (strain ATCC 25840 / 63/290 / NCTC 10512)</name>
    <dbReference type="NCBI Taxonomy" id="444178"/>
    <lineage>
        <taxon>Bacteria</taxon>
        <taxon>Pseudomonadati</taxon>
        <taxon>Pseudomonadota</taxon>
        <taxon>Alphaproteobacteria</taxon>
        <taxon>Hyphomicrobiales</taxon>
        <taxon>Brucellaceae</taxon>
        <taxon>Brucella/Ochrobactrum group</taxon>
        <taxon>Brucella</taxon>
    </lineage>
</organism>
<sequence length="341" mass="36840">MASEAPPFWWDEPDWRALALAPAAWIYGRVSGRRLIRAVPPRVSLPVLCVGNFTVGGAGKTPTAIAFARGAIARGMKPGIVSRGYGGNYSGLHLVDPGHDGARHVGDEPLLLARHAAVALSPDRVKAAEYLKSLGCDFIIMDDGFQSARLHADFSLLVVDASRGIGNGRVIPAGPLRAPLTDQMRKTDALLCIGKGNGADFVIRQAARAGRPIYHAQLRPSSSATVAGRRWLAFAGIGNPDKFYESVRQAGGEVVETHSFADHYSFEPDDIRGLVDMARRQGLGLITTAKDHVRLATMPDVPPEFLSKLAVLDVDLEFDRTDALDHILDTVVERFKSRLHG</sequence>
<keyword id="KW-0067">ATP-binding</keyword>
<keyword id="KW-0418">Kinase</keyword>
<keyword id="KW-0441">Lipid A biosynthesis</keyword>
<keyword id="KW-0444">Lipid biosynthesis</keyword>
<keyword id="KW-0443">Lipid metabolism</keyword>
<keyword id="KW-0547">Nucleotide-binding</keyword>
<keyword id="KW-0808">Transferase</keyword>
<evidence type="ECO:0000255" key="1">
    <source>
        <dbReference type="HAMAP-Rule" id="MF_00409"/>
    </source>
</evidence>
<comment type="function">
    <text evidence="1">Transfers the gamma-phosphate of ATP to the 4'-position of a tetraacyldisaccharide 1-phosphate intermediate (termed DS-1-P) to form tetraacyldisaccharide 1,4'-bis-phosphate (lipid IVA).</text>
</comment>
<comment type="catalytic activity">
    <reaction evidence="1">
        <text>a lipid A disaccharide + ATP = a lipid IVA + ADP + H(+)</text>
        <dbReference type="Rhea" id="RHEA:67840"/>
        <dbReference type="ChEBI" id="CHEBI:15378"/>
        <dbReference type="ChEBI" id="CHEBI:30616"/>
        <dbReference type="ChEBI" id="CHEBI:176343"/>
        <dbReference type="ChEBI" id="CHEBI:176425"/>
        <dbReference type="ChEBI" id="CHEBI:456216"/>
        <dbReference type="EC" id="2.7.1.130"/>
    </reaction>
</comment>
<comment type="pathway">
    <text evidence="1">Glycolipid biosynthesis; lipid IV(A) biosynthesis; lipid IV(A) from (3R)-3-hydroxytetradecanoyl-[acyl-carrier-protein] and UDP-N-acetyl-alpha-D-glucosamine: step 6/6.</text>
</comment>
<comment type="similarity">
    <text evidence="1">Belongs to the LpxK family.</text>
</comment>